<evidence type="ECO:0000255" key="1"/>
<evidence type="ECO:0000255" key="2">
    <source>
        <dbReference type="HAMAP-Rule" id="MF_04131"/>
    </source>
</evidence>
<evidence type="ECO:0000305" key="3"/>
<feature type="signal peptide" evidence="2">
    <location>
        <begin position="1"/>
        <end position="50"/>
    </location>
</feature>
<feature type="chain" id="PRO_0000369111" description="Outer capsid glycoprotein VP7" evidence="2">
    <location>
        <begin position="51"/>
        <end position="326"/>
    </location>
</feature>
<feature type="region of interest" description="CNP motif; interaction with ITGAV/ITGB3" evidence="2">
    <location>
        <begin position="165"/>
        <end position="167"/>
    </location>
</feature>
<feature type="region of interest" description="GPR motif; interaction with ITGAX/ITGB2" evidence="2">
    <location>
        <begin position="253"/>
        <end position="255"/>
    </location>
</feature>
<feature type="binding site" evidence="2">
    <location>
        <position position="95"/>
    </location>
    <ligand>
        <name>Ca(2+)</name>
        <dbReference type="ChEBI" id="CHEBI:29108"/>
        <label>1</label>
    </ligand>
</feature>
<feature type="binding site" evidence="2">
    <location>
        <position position="177"/>
    </location>
    <ligand>
        <name>Ca(2+)</name>
        <dbReference type="ChEBI" id="CHEBI:29108"/>
        <label>2</label>
    </ligand>
</feature>
<feature type="binding site" evidence="2">
    <location>
        <position position="206"/>
    </location>
    <ligand>
        <name>Ca(2+)</name>
        <dbReference type="ChEBI" id="CHEBI:29108"/>
        <label>1</label>
    </ligand>
</feature>
<feature type="binding site" evidence="2">
    <location>
        <position position="214"/>
    </location>
    <ligand>
        <name>Ca(2+)</name>
        <dbReference type="ChEBI" id="CHEBI:29108"/>
        <label>1</label>
    </ligand>
</feature>
<feature type="binding site" evidence="2">
    <location>
        <position position="216"/>
    </location>
    <ligand>
        <name>Ca(2+)</name>
        <dbReference type="ChEBI" id="CHEBI:29108"/>
        <label>1</label>
    </ligand>
</feature>
<feature type="binding site" evidence="2">
    <location>
        <position position="228"/>
    </location>
    <ligand>
        <name>Ca(2+)</name>
        <dbReference type="ChEBI" id="CHEBI:29108"/>
        <label>2</label>
    </ligand>
</feature>
<feature type="binding site" evidence="2">
    <location>
        <position position="229"/>
    </location>
    <ligand>
        <name>Ca(2+)</name>
        <dbReference type="ChEBI" id="CHEBI:29108"/>
        <label>2</label>
    </ligand>
</feature>
<feature type="binding site" evidence="2">
    <location>
        <position position="231"/>
    </location>
    <ligand>
        <name>Ca(2+)</name>
        <dbReference type="ChEBI" id="CHEBI:29108"/>
        <label>2</label>
    </ligand>
</feature>
<feature type="binding site" evidence="2">
    <location>
        <position position="301"/>
    </location>
    <ligand>
        <name>Ca(2+)</name>
        <dbReference type="ChEBI" id="CHEBI:29108"/>
        <label>2</label>
    </ligand>
</feature>
<feature type="glycosylation site" description="N-linked (GlcNAc...) asparagine; by host" evidence="1">
    <location>
        <position position="69"/>
    </location>
</feature>
<feature type="glycosylation site" description="N-linked (GlcNAc...) asparagine; by host" evidence="1">
    <location>
        <position position="238"/>
    </location>
</feature>
<feature type="disulfide bond" evidence="2">
    <location>
        <begin position="82"/>
        <end position="135"/>
    </location>
</feature>
<feature type="disulfide bond" evidence="2">
    <location>
        <begin position="165"/>
        <end position="249"/>
    </location>
</feature>
<feature type="disulfide bond" evidence="2">
    <location>
        <begin position="191"/>
        <end position="244"/>
    </location>
</feature>
<feature type="disulfide bond" evidence="2">
    <location>
        <begin position="196"/>
        <end position="207"/>
    </location>
</feature>
<feature type="splice variant" id="VSP_038619" description="In isoform 2." evidence="3">
    <location>
        <begin position="1"/>
        <end position="29"/>
    </location>
</feature>
<sequence length="326" mass="37236">MYGIEYTTVLTFLISVILLNYVLKSLTRIMDFIIYRFLLIIVILSPFLNAQNYGINLPITGSMDTPYTNSTREEVFLTSTLCLYYPTEAATEINDNSWKDTLSQLFCTKGWPTGSIYFKDYTNIASFSVDPQLYCDYNLVLMKYDATLQLDMSELADLLLNEWLCNPMDITLYYYQQTDEANKWISMGSSCTIKVCPLNTQTLGIGCLTTDTNTFEEVATAEKLVITDVVDGVNHKLNVTTNTCTIRNCKKLGPRENVAVIQVGGSDILDITADPTTAPQTERMMRVNWKKWWQVFYTIVDYVNQIVQAMSKRSRSLNSAAFYYRI</sequence>
<protein>
    <recommendedName>
        <fullName evidence="2">Outer capsid glycoprotein VP7</fullName>
    </recommendedName>
</protein>
<keyword id="KW-0024">Alternative initiation</keyword>
<keyword id="KW-0106">Calcium</keyword>
<keyword id="KW-0167">Capsid protein</keyword>
<keyword id="KW-1015">Disulfide bond</keyword>
<keyword id="KW-0325">Glycoprotein</keyword>
<keyword id="KW-1038">Host endoplasmic reticulum</keyword>
<keyword id="KW-0945">Host-virus interaction</keyword>
<keyword id="KW-0479">Metal-binding</keyword>
<keyword id="KW-1152">Outer capsid protein</keyword>
<keyword id="KW-0732">Signal</keyword>
<keyword id="KW-1146">T=13 icosahedral capsid protein</keyword>
<keyword id="KW-0946">Virion</keyword>
<reference key="1">
    <citation type="journal article" date="1997" name="Arch. Virol.">
        <title>Genetic variation in the VP7 gene of human rotavirus serotype 3 (G3 type) isolated in China and Japan.</title>
        <authorList>
            <person name="Wen L."/>
            <person name="Nakayama M."/>
            <person name="Yamanishi Y."/>
            <person name="Nishio O."/>
            <person name="Fang Z.Y."/>
            <person name="Nakagomi O."/>
            <person name="Araki K."/>
            <person name="Nishimura S."/>
            <person name="Hasegawa A."/>
            <person name="Muller W.E."/>
            <person name="Ushijima H."/>
        </authorList>
    </citation>
    <scope>NUCLEOTIDE SEQUENCE [GENOMIC RNA]</scope>
    <source>
        <strain>AU-1</strain>
        <strain>Isolate Ai-75</strain>
    </source>
</reference>
<accession>O42044</accession>
<comment type="function">
    <text evidence="2">Calcium-binding protein that interacts with rotavirus cell receptors once the initial attachment by VP4 has been achieved. Rotavirus attachment and entry into the host cell probably involves multiple sequential contacts between the outer capsid proteins VP4 and VP7, and the cell receptors. Following entry into the host cell, low intracellular or intravesicular Ca(2+) concentration probably causes the calcium-stabilized VP7 trimers to dissociate from the virion. This step is probably necessary for the membrane-disrupting entry step and the release of VP4, which is locked onto the virion by VP7.</text>
</comment>
<comment type="subunit">
    <text evidence="2">Homotrimer; disulfide-linked. 2 Ca(2+) ions bound at each subunit interface in the trimer hold the trimer together. Interacts with the intermediate capsid protein VP6. Interacts with the outer capsid protein VP5*.</text>
</comment>
<comment type="subcellular location">
    <subcellularLocation>
        <location evidence="2">Virion</location>
    </subcellularLocation>
    <subcellularLocation>
        <location evidence="2">Host endoplasmic reticulum lumen</location>
    </subcellularLocation>
    <text evidence="2">The outer layer contains 780 copies of VP7, grouped as 260 trimers. Immature double-layered particles assembled in the cytoplasm bud across the membrane of the endoplasmic reticulum, acquiring during this process a transient lipid membrane that is modified with the ER resident viral glycoproteins NSP4 and VP7; these enveloped particles also contain VP4. As the particles move towards the interior of the ER cisternae, the transient lipid membrane and the non-structural protein NSP4 are lost, while the virus surface proteins VP4 and VP7 rearrange to form the outermost virus protein layer, yielding mature infectious triple-layered particles.</text>
</comment>
<comment type="alternative products">
    <event type="alternative initiation"/>
    <isoform>
        <id>O42044-1</id>
        <name>1</name>
        <sequence type="displayed"/>
    </isoform>
    <isoform>
        <id>O42044-2</id>
        <name>2</name>
        <sequence type="described" ref="VSP_038619"/>
    </isoform>
</comment>
<comment type="PTM">
    <text evidence="2">N-glycosylated.</text>
</comment>
<comment type="PTM">
    <text evidence="2">The N-terminus is blocked possibly by pyroglutamic acid.</text>
</comment>
<comment type="miscellaneous">
    <text evidence="2">Some rotavirus strains are neuraminidase-sensitive and require sialic acid to attach to the cell surface. Some rotavirus strains are integrin-dependent. Some rotavirus strains depend on ganglioside for their entry into the host cell. Hsp70 also seems to be involved in the entry of some strains.</text>
</comment>
<comment type="miscellaneous">
    <text evidence="2">In group A rotaviruses, VP7 defines the G serotype.</text>
</comment>
<comment type="miscellaneous">
    <molecule>Isoform 2</molecule>
    <text evidence="3">Produced by alternative initiation at Met-30 of isoform 1.</text>
</comment>
<comment type="similarity">
    <text evidence="2">Belongs to the rotavirus VP7 family.</text>
</comment>
<name>VP7_ROTH3</name>
<organismHost>
    <name type="scientific">Homo sapiens</name>
    <name type="common">Human</name>
    <dbReference type="NCBI Taxonomy" id="9606"/>
</organismHost>
<dbReference type="EMBL" id="D86270">
    <property type="protein sequence ID" value="BAA23291.1"/>
    <property type="molecule type" value="Genomic_RNA"/>
</dbReference>
<dbReference type="EMBL" id="D86271">
    <property type="protein sequence ID" value="BAA23292.1"/>
    <property type="molecule type" value="Genomic_RNA"/>
</dbReference>
<dbReference type="SMR" id="O42044"/>
<dbReference type="Proteomes" id="UP000001454">
    <property type="component" value="Genome"/>
</dbReference>
<dbReference type="GO" id="GO:0044166">
    <property type="term" value="C:host cell endoplasmic reticulum lumen"/>
    <property type="evidence" value="ECO:0007669"/>
    <property type="project" value="UniProtKB-SubCell"/>
</dbReference>
<dbReference type="GO" id="GO:0039621">
    <property type="term" value="C:T=13 icosahedral viral capsid"/>
    <property type="evidence" value="ECO:0007669"/>
    <property type="project" value="UniProtKB-UniRule"/>
</dbReference>
<dbReference type="GO" id="GO:0039624">
    <property type="term" value="C:viral outer capsid"/>
    <property type="evidence" value="ECO:0007669"/>
    <property type="project" value="UniProtKB-UniRule"/>
</dbReference>
<dbReference type="GO" id="GO:0046872">
    <property type="term" value="F:metal ion binding"/>
    <property type="evidence" value="ECO:0007669"/>
    <property type="project" value="UniProtKB-KW"/>
</dbReference>
<dbReference type="FunFam" id="2.60.120.800:FF:000001">
    <property type="entry name" value="Outer capsid glycoprotein VP7"/>
    <property type="match status" value="1"/>
</dbReference>
<dbReference type="Gene3D" id="3.40.50.11130">
    <property type="entry name" value="Glycoprotein VP7, domain 1"/>
    <property type="match status" value="1"/>
</dbReference>
<dbReference type="Gene3D" id="2.60.120.800">
    <property type="entry name" value="Rotavirus outer-layer protein VP7, domain 2"/>
    <property type="match status" value="1"/>
</dbReference>
<dbReference type="HAMAP" id="MF_04130">
    <property type="entry name" value="Rota_VP7"/>
    <property type="match status" value="1"/>
</dbReference>
<dbReference type="HAMAP" id="MF_04131">
    <property type="entry name" value="Rota_VP7_A"/>
    <property type="match status" value="1"/>
</dbReference>
<dbReference type="InterPro" id="IPR001963">
    <property type="entry name" value="VP7"/>
</dbReference>
<dbReference type="InterPro" id="IPR042207">
    <property type="entry name" value="VP7_1"/>
</dbReference>
<dbReference type="InterPro" id="IPR042210">
    <property type="entry name" value="VP7_2"/>
</dbReference>
<dbReference type="Pfam" id="PF00434">
    <property type="entry name" value="VP7"/>
    <property type="match status" value="1"/>
</dbReference>
<proteinExistence type="inferred from homology"/>
<organism>
    <name type="scientific">Rotavirus A (strain RVA/Human/Japan/AU-1/1982/G3P3[9])</name>
    <name type="common">RV-A</name>
    <dbReference type="NCBI Taxonomy" id="39013"/>
    <lineage>
        <taxon>Viruses</taxon>
        <taxon>Riboviria</taxon>
        <taxon>Orthornavirae</taxon>
        <taxon>Duplornaviricota</taxon>
        <taxon>Resentoviricetes</taxon>
        <taxon>Reovirales</taxon>
        <taxon>Sedoreoviridae</taxon>
        <taxon>Rotavirus</taxon>
        <taxon>Rotavirus A</taxon>
    </lineage>
</organism>